<gene>
    <name type="ORF">SPAC7D4.08</name>
</gene>
<accession>O14263</accession>
<proteinExistence type="predicted"/>
<protein>
    <recommendedName>
        <fullName>Uncharacterized protein C7D4.08</fullName>
    </recommendedName>
</protein>
<reference key="1">
    <citation type="journal article" date="2002" name="Nature">
        <title>The genome sequence of Schizosaccharomyces pombe.</title>
        <authorList>
            <person name="Wood V."/>
            <person name="Gwilliam R."/>
            <person name="Rajandream M.A."/>
            <person name="Lyne M.H."/>
            <person name="Lyne R."/>
            <person name="Stewart A."/>
            <person name="Sgouros J.G."/>
            <person name="Peat N."/>
            <person name="Hayles J."/>
            <person name="Baker S.G."/>
            <person name="Basham D."/>
            <person name="Bowman S."/>
            <person name="Brooks K."/>
            <person name="Brown D."/>
            <person name="Brown S."/>
            <person name="Chillingworth T."/>
            <person name="Churcher C.M."/>
            <person name="Collins M."/>
            <person name="Connor R."/>
            <person name="Cronin A."/>
            <person name="Davis P."/>
            <person name="Feltwell T."/>
            <person name="Fraser A."/>
            <person name="Gentles S."/>
            <person name="Goble A."/>
            <person name="Hamlin N."/>
            <person name="Harris D.E."/>
            <person name="Hidalgo J."/>
            <person name="Hodgson G."/>
            <person name="Holroyd S."/>
            <person name="Hornsby T."/>
            <person name="Howarth S."/>
            <person name="Huckle E.J."/>
            <person name="Hunt S."/>
            <person name="Jagels K."/>
            <person name="James K.D."/>
            <person name="Jones L."/>
            <person name="Jones M."/>
            <person name="Leather S."/>
            <person name="McDonald S."/>
            <person name="McLean J."/>
            <person name="Mooney P."/>
            <person name="Moule S."/>
            <person name="Mungall K.L."/>
            <person name="Murphy L.D."/>
            <person name="Niblett D."/>
            <person name="Odell C."/>
            <person name="Oliver K."/>
            <person name="O'Neil S."/>
            <person name="Pearson D."/>
            <person name="Quail M.A."/>
            <person name="Rabbinowitsch E."/>
            <person name="Rutherford K.M."/>
            <person name="Rutter S."/>
            <person name="Saunders D."/>
            <person name="Seeger K."/>
            <person name="Sharp S."/>
            <person name="Skelton J."/>
            <person name="Simmonds M.N."/>
            <person name="Squares R."/>
            <person name="Squares S."/>
            <person name="Stevens K."/>
            <person name="Taylor K."/>
            <person name="Taylor R.G."/>
            <person name="Tivey A."/>
            <person name="Walsh S.V."/>
            <person name="Warren T."/>
            <person name="Whitehead S."/>
            <person name="Woodward J.R."/>
            <person name="Volckaert G."/>
            <person name="Aert R."/>
            <person name="Robben J."/>
            <person name="Grymonprez B."/>
            <person name="Weltjens I."/>
            <person name="Vanstreels E."/>
            <person name="Rieger M."/>
            <person name="Schaefer M."/>
            <person name="Mueller-Auer S."/>
            <person name="Gabel C."/>
            <person name="Fuchs M."/>
            <person name="Duesterhoeft A."/>
            <person name="Fritzc C."/>
            <person name="Holzer E."/>
            <person name="Moestl D."/>
            <person name="Hilbert H."/>
            <person name="Borzym K."/>
            <person name="Langer I."/>
            <person name="Beck A."/>
            <person name="Lehrach H."/>
            <person name="Reinhardt R."/>
            <person name="Pohl T.M."/>
            <person name="Eger P."/>
            <person name="Zimmermann W."/>
            <person name="Wedler H."/>
            <person name="Wambutt R."/>
            <person name="Purnelle B."/>
            <person name="Goffeau A."/>
            <person name="Cadieu E."/>
            <person name="Dreano S."/>
            <person name="Gloux S."/>
            <person name="Lelaure V."/>
            <person name="Mottier S."/>
            <person name="Galibert F."/>
            <person name="Aves S.J."/>
            <person name="Xiang Z."/>
            <person name="Hunt C."/>
            <person name="Moore K."/>
            <person name="Hurst S.M."/>
            <person name="Lucas M."/>
            <person name="Rochet M."/>
            <person name="Gaillardin C."/>
            <person name="Tallada V.A."/>
            <person name="Garzon A."/>
            <person name="Thode G."/>
            <person name="Daga R.R."/>
            <person name="Cruzado L."/>
            <person name="Jimenez J."/>
            <person name="Sanchez M."/>
            <person name="del Rey F."/>
            <person name="Benito J."/>
            <person name="Dominguez A."/>
            <person name="Revuelta J.L."/>
            <person name="Moreno S."/>
            <person name="Armstrong J."/>
            <person name="Forsburg S.L."/>
            <person name="Cerutti L."/>
            <person name="Lowe T."/>
            <person name="McCombie W.R."/>
            <person name="Paulsen I."/>
            <person name="Potashkin J."/>
            <person name="Shpakovski G.V."/>
            <person name="Ussery D."/>
            <person name="Barrell B.G."/>
            <person name="Nurse P."/>
        </authorList>
    </citation>
    <scope>NUCLEOTIDE SEQUENCE [LARGE SCALE GENOMIC DNA]</scope>
    <source>
        <strain>972 / ATCC 24843</strain>
    </source>
</reference>
<reference key="2">
    <citation type="journal article" date="2006" name="Nat. Biotechnol.">
        <title>ORFeome cloning and global analysis of protein localization in the fission yeast Schizosaccharomyces pombe.</title>
        <authorList>
            <person name="Matsuyama A."/>
            <person name="Arai R."/>
            <person name="Yashiroda Y."/>
            <person name="Shirai A."/>
            <person name="Kamata A."/>
            <person name="Sekido S."/>
            <person name="Kobayashi Y."/>
            <person name="Hashimoto A."/>
            <person name="Hamamoto M."/>
            <person name="Hiraoka Y."/>
            <person name="Horinouchi S."/>
            <person name="Yoshida M."/>
        </authorList>
    </citation>
    <scope>SUBCELLULAR LOCATION [LARGE SCALE ANALYSIS]</scope>
</reference>
<keyword id="KW-0496">Mitochondrion</keyword>
<keyword id="KW-1185">Reference proteome</keyword>
<comment type="subcellular location">
    <subcellularLocation>
        <location evidence="1">Mitochondrion</location>
    </subcellularLocation>
</comment>
<evidence type="ECO:0000269" key="1">
    <source>
    </source>
</evidence>
<name>YFP8_SCHPO</name>
<feature type="chain" id="PRO_0000304087" description="Uncharacterized protein C7D4.08">
    <location>
        <begin position="1"/>
        <end position="96"/>
    </location>
</feature>
<dbReference type="EMBL" id="CU329670">
    <property type="protein sequence ID" value="CAB16725.2"/>
    <property type="molecule type" value="Genomic_DNA"/>
</dbReference>
<dbReference type="PIR" id="T39086">
    <property type="entry name" value="T39086"/>
</dbReference>
<dbReference type="RefSeq" id="NP_593851.1">
    <property type="nucleotide sequence ID" value="NM_001019280.2"/>
</dbReference>
<dbReference type="BioGRID" id="279189">
    <property type="interactions" value="1"/>
</dbReference>
<dbReference type="STRING" id="284812.O14263"/>
<dbReference type="PaxDb" id="4896-SPAC7D4.08.1"/>
<dbReference type="EnsemblFungi" id="SPAC7D4.08.1">
    <property type="protein sequence ID" value="SPAC7D4.08.1:pep"/>
    <property type="gene ID" value="SPAC7D4.08"/>
</dbReference>
<dbReference type="KEGG" id="spo:2542739"/>
<dbReference type="PomBase" id="SPAC7D4.08"/>
<dbReference type="VEuPathDB" id="FungiDB:SPAC7D4.08"/>
<dbReference type="HOGENOM" id="CLU_2360957_0_0_1"/>
<dbReference type="InParanoid" id="O14263"/>
<dbReference type="PRO" id="PR:O14263"/>
<dbReference type="Proteomes" id="UP000002485">
    <property type="component" value="Chromosome I"/>
</dbReference>
<dbReference type="GO" id="GO:0005739">
    <property type="term" value="C:mitochondrion"/>
    <property type="evidence" value="ECO:0007005"/>
    <property type="project" value="PomBase"/>
</dbReference>
<organism>
    <name type="scientific">Schizosaccharomyces pombe (strain 972 / ATCC 24843)</name>
    <name type="common">Fission yeast</name>
    <dbReference type="NCBI Taxonomy" id="284812"/>
    <lineage>
        <taxon>Eukaryota</taxon>
        <taxon>Fungi</taxon>
        <taxon>Dikarya</taxon>
        <taxon>Ascomycota</taxon>
        <taxon>Taphrinomycotina</taxon>
        <taxon>Schizosaccharomycetes</taxon>
        <taxon>Schizosaccharomycetales</taxon>
        <taxon>Schizosaccharomycetaceae</taxon>
        <taxon>Schizosaccharomyces</taxon>
    </lineage>
</organism>
<sequence>MNFVSSILIRWCDVPVYILLRKCVIYKFAYSSRKIESVHCAITDDEVMSYNNEDMVPFSAINLPIRFLIFYNAFRSNTSWNYNESQIGNLTISKQS</sequence>